<name>Y3691_SHEFN</name>
<protein>
    <recommendedName>
        <fullName>Uncharacterized protein Sfri_3691</fullName>
    </recommendedName>
</protein>
<reference key="1">
    <citation type="submission" date="2006-08" db="EMBL/GenBank/DDBJ databases">
        <title>Complete sequence of Shewanella frigidimarina NCIMB 400.</title>
        <authorList>
            <consortium name="US DOE Joint Genome Institute"/>
            <person name="Copeland A."/>
            <person name="Lucas S."/>
            <person name="Lapidus A."/>
            <person name="Barry K."/>
            <person name="Detter J.C."/>
            <person name="Glavina del Rio T."/>
            <person name="Hammon N."/>
            <person name="Israni S."/>
            <person name="Dalin E."/>
            <person name="Tice H."/>
            <person name="Pitluck S."/>
            <person name="Fredrickson J.K."/>
            <person name="Kolker E."/>
            <person name="McCuel L.A."/>
            <person name="DiChristina T."/>
            <person name="Nealson K.H."/>
            <person name="Newman D."/>
            <person name="Tiedje J.M."/>
            <person name="Zhou J."/>
            <person name="Romine M.F."/>
            <person name="Culley D.E."/>
            <person name="Serres M."/>
            <person name="Chertkov O."/>
            <person name="Brettin T."/>
            <person name="Bruce D."/>
            <person name="Han C."/>
            <person name="Tapia R."/>
            <person name="Gilna P."/>
            <person name="Schmutz J."/>
            <person name="Larimer F."/>
            <person name="Land M."/>
            <person name="Hauser L."/>
            <person name="Kyrpides N."/>
            <person name="Mikhailova N."/>
            <person name="Richardson P."/>
        </authorList>
    </citation>
    <scope>NUCLEOTIDE SEQUENCE [LARGE SCALE GENOMIC DNA]</scope>
    <source>
        <strain>NCIMB 400</strain>
    </source>
</reference>
<reference key="2">
    <citation type="journal article" date="1992" name="Biochemistry">
        <title>Sequence of the gene encoding flavocytochrome c from Shewanella putrefaciens: a tetraheme flavoenzyme that is a soluble fumarate reductase related to the membrane-bound enzymes from other bacteria.</title>
        <authorList>
            <person name="Pealing S.L."/>
            <person name="Black A.C."/>
            <person name="Manson F.D.C."/>
            <person name="Ward F.B."/>
            <person name="Chapman S.K."/>
            <person name="Reid G.A."/>
        </authorList>
    </citation>
    <scope>NUCLEOTIDE SEQUENCE [GENOMIC DNA] OF 1-118</scope>
</reference>
<gene>
    <name type="ordered locus">Sfri_3691</name>
</gene>
<accession>Q02481</accession>
<accession>Q07WU6</accession>
<keyword id="KW-1185">Reference proteome</keyword>
<comment type="similarity">
    <text evidence="2">To B.subtilis YwkD.</text>
</comment>
<proteinExistence type="predicted"/>
<dbReference type="EMBL" id="CP000447">
    <property type="protein sequence ID" value="ABI73518.1"/>
    <property type="molecule type" value="Genomic_DNA"/>
</dbReference>
<dbReference type="EMBL" id="L04283">
    <property type="protein sequence ID" value="AAA70386.1"/>
    <property type="molecule type" value="Genomic_DNA"/>
</dbReference>
<dbReference type="RefSeq" id="WP_011639106.1">
    <property type="nucleotide sequence ID" value="NC_008345.1"/>
</dbReference>
<dbReference type="SMR" id="Q02481"/>
<dbReference type="STRING" id="318167.Sfri_3691"/>
<dbReference type="KEGG" id="sfr:Sfri_3691"/>
<dbReference type="eggNOG" id="COG0346">
    <property type="taxonomic scope" value="Bacteria"/>
</dbReference>
<dbReference type="HOGENOM" id="CLU_046006_10_1_6"/>
<dbReference type="OrthoDB" id="9794917at2"/>
<dbReference type="Proteomes" id="UP000000684">
    <property type="component" value="Chromosome"/>
</dbReference>
<dbReference type="CDD" id="cd07263">
    <property type="entry name" value="VOC_like"/>
    <property type="match status" value="1"/>
</dbReference>
<dbReference type="Gene3D" id="3.10.180.10">
    <property type="entry name" value="2,3-Dihydroxybiphenyl 1,2-Dioxygenase, domain 1"/>
    <property type="match status" value="1"/>
</dbReference>
<dbReference type="InterPro" id="IPR029068">
    <property type="entry name" value="Glyas_Bleomycin-R_OHBP_Dase"/>
</dbReference>
<dbReference type="InterPro" id="IPR004360">
    <property type="entry name" value="Glyas_Fos-R_dOase_dom"/>
</dbReference>
<dbReference type="InterPro" id="IPR037523">
    <property type="entry name" value="VOC"/>
</dbReference>
<dbReference type="PANTHER" id="PTHR36437">
    <property type="entry name" value="GLYOXALASE/BLEOMYCIN RESISTANCE PROTEIN/DIOXYGENASE"/>
    <property type="match status" value="1"/>
</dbReference>
<dbReference type="PANTHER" id="PTHR36437:SF2">
    <property type="entry name" value="GLYOXALASE_BLEOMYCIN RESISTANCE PROTEIN_DIOXYGENASE"/>
    <property type="match status" value="1"/>
</dbReference>
<dbReference type="Pfam" id="PF00903">
    <property type="entry name" value="Glyoxalase"/>
    <property type="match status" value="1"/>
</dbReference>
<dbReference type="SUPFAM" id="SSF54593">
    <property type="entry name" value="Glyoxalase/Bleomycin resistance protein/Dihydroxybiphenyl dioxygenase"/>
    <property type="match status" value="1"/>
</dbReference>
<dbReference type="PROSITE" id="PS51819">
    <property type="entry name" value="VOC"/>
    <property type="match status" value="1"/>
</dbReference>
<sequence>MKQSIVHIALVVNDYDEAIDFYVNKLKFDLIEDTYQAEQDKRWVVVSPPGSNGVSLLLARASKPEQHDFIGNQAGGRVFLFLNTDDFWRDYNRMQLDGIKFVRPPQEQDYGTVAVFEDLYGNLWDLLQLNDKQPI</sequence>
<feature type="chain" id="PRO_0000066206" description="Uncharacterized protein Sfri_3691">
    <location>
        <begin position="1"/>
        <end position="135"/>
    </location>
</feature>
<feature type="domain" description="VOC" evidence="1">
    <location>
        <begin position="4"/>
        <end position="129"/>
    </location>
</feature>
<organism>
    <name type="scientific">Shewanella frigidimarina (strain NCIMB 400)</name>
    <dbReference type="NCBI Taxonomy" id="318167"/>
    <lineage>
        <taxon>Bacteria</taxon>
        <taxon>Pseudomonadati</taxon>
        <taxon>Pseudomonadota</taxon>
        <taxon>Gammaproteobacteria</taxon>
        <taxon>Alteromonadales</taxon>
        <taxon>Shewanellaceae</taxon>
        <taxon>Shewanella</taxon>
    </lineage>
</organism>
<evidence type="ECO:0000255" key="1">
    <source>
        <dbReference type="PROSITE-ProRule" id="PRU01163"/>
    </source>
</evidence>
<evidence type="ECO:0000305" key="2"/>